<dbReference type="EMBL" id="Z68241">
    <property type="protein sequence ID" value="CAA92539.1"/>
    <property type="molecule type" value="Genomic_DNA"/>
</dbReference>
<dbReference type="SMR" id="P69643"/>
<dbReference type="GO" id="GO:0009507">
    <property type="term" value="C:chloroplast"/>
    <property type="evidence" value="ECO:0007669"/>
    <property type="project" value="UniProtKB-SubCell"/>
</dbReference>
<dbReference type="GO" id="GO:0015935">
    <property type="term" value="C:small ribosomal subunit"/>
    <property type="evidence" value="ECO:0007669"/>
    <property type="project" value="InterPro"/>
</dbReference>
<dbReference type="GO" id="GO:0019843">
    <property type="term" value="F:rRNA binding"/>
    <property type="evidence" value="ECO:0007669"/>
    <property type="project" value="UniProtKB-KW"/>
</dbReference>
<dbReference type="GO" id="GO:0003735">
    <property type="term" value="F:structural constituent of ribosome"/>
    <property type="evidence" value="ECO:0007669"/>
    <property type="project" value="InterPro"/>
</dbReference>
<dbReference type="GO" id="GO:0042274">
    <property type="term" value="P:ribosomal small subunit biogenesis"/>
    <property type="evidence" value="ECO:0007669"/>
    <property type="project" value="TreeGrafter"/>
</dbReference>
<dbReference type="GO" id="GO:0006412">
    <property type="term" value="P:translation"/>
    <property type="evidence" value="ECO:0007669"/>
    <property type="project" value="InterPro"/>
</dbReference>
<dbReference type="CDD" id="cd00165">
    <property type="entry name" value="S4"/>
    <property type="match status" value="1"/>
</dbReference>
<dbReference type="FunFam" id="1.10.1050.10:FF:000002">
    <property type="entry name" value="30S ribosomal protein S4, chloroplastic"/>
    <property type="match status" value="1"/>
</dbReference>
<dbReference type="FunFam" id="3.10.290.10:FF:000081">
    <property type="entry name" value="30S ribosomal protein S4, chloroplastic"/>
    <property type="match status" value="1"/>
</dbReference>
<dbReference type="Gene3D" id="1.10.1050.10">
    <property type="entry name" value="Ribosomal Protein S4 Delta 41, Chain A, domain 1"/>
    <property type="match status" value="1"/>
</dbReference>
<dbReference type="Gene3D" id="3.10.290.10">
    <property type="entry name" value="RNA-binding S4 domain"/>
    <property type="match status" value="1"/>
</dbReference>
<dbReference type="HAMAP" id="MF_01306_B">
    <property type="entry name" value="Ribosomal_uS4_B"/>
    <property type="match status" value="1"/>
</dbReference>
<dbReference type="InterPro" id="IPR022801">
    <property type="entry name" value="Ribosomal_uS4"/>
</dbReference>
<dbReference type="InterPro" id="IPR005709">
    <property type="entry name" value="Ribosomal_uS4_bac-type"/>
</dbReference>
<dbReference type="InterPro" id="IPR018079">
    <property type="entry name" value="Ribosomal_uS4_CS"/>
</dbReference>
<dbReference type="InterPro" id="IPR001912">
    <property type="entry name" value="Ribosomal_uS4_N"/>
</dbReference>
<dbReference type="InterPro" id="IPR002942">
    <property type="entry name" value="S4_RNA-bd"/>
</dbReference>
<dbReference type="InterPro" id="IPR036986">
    <property type="entry name" value="S4_RNA-bd_sf"/>
</dbReference>
<dbReference type="NCBIfam" id="NF003717">
    <property type="entry name" value="PRK05327.1"/>
    <property type="match status" value="1"/>
</dbReference>
<dbReference type="NCBIfam" id="TIGR01017">
    <property type="entry name" value="rpsD_bact"/>
    <property type="match status" value="1"/>
</dbReference>
<dbReference type="PANTHER" id="PTHR11831">
    <property type="entry name" value="30S 40S RIBOSOMAL PROTEIN"/>
    <property type="match status" value="1"/>
</dbReference>
<dbReference type="PANTHER" id="PTHR11831:SF4">
    <property type="entry name" value="SMALL RIBOSOMAL SUBUNIT PROTEIN US4M"/>
    <property type="match status" value="1"/>
</dbReference>
<dbReference type="Pfam" id="PF00163">
    <property type="entry name" value="Ribosomal_S4"/>
    <property type="match status" value="1"/>
</dbReference>
<dbReference type="Pfam" id="PF01479">
    <property type="entry name" value="S4"/>
    <property type="match status" value="1"/>
</dbReference>
<dbReference type="SMART" id="SM01390">
    <property type="entry name" value="Ribosomal_S4"/>
    <property type="match status" value="1"/>
</dbReference>
<dbReference type="SMART" id="SM00363">
    <property type="entry name" value="S4"/>
    <property type="match status" value="1"/>
</dbReference>
<dbReference type="SUPFAM" id="SSF55174">
    <property type="entry name" value="Alpha-L RNA-binding motif"/>
    <property type="match status" value="1"/>
</dbReference>
<dbReference type="PROSITE" id="PS00632">
    <property type="entry name" value="RIBOSOMAL_S4"/>
    <property type="match status" value="1"/>
</dbReference>
<dbReference type="PROSITE" id="PS50889">
    <property type="entry name" value="S4"/>
    <property type="match status" value="1"/>
</dbReference>
<keyword id="KW-0150">Chloroplast</keyword>
<keyword id="KW-0934">Plastid</keyword>
<keyword id="KW-0687">Ribonucleoprotein</keyword>
<keyword id="KW-0689">Ribosomal protein</keyword>
<keyword id="KW-0694">RNA-binding</keyword>
<keyword id="KW-0699">rRNA-binding</keyword>
<geneLocation type="chloroplast"/>
<feature type="chain" id="PRO_0000132593" description="Small ribosomal subunit protein uS4c">
    <location>
        <begin position="1" status="less than"/>
        <end position="183" status="greater than"/>
    </location>
</feature>
<feature type="domain" description="S4 RNA-binding">
    <location>
        <begin position="82"/>
        <end position="143"/>
    </location>
</feature>
<feature type="non-terminal residue">
    <location>
        <position position="1"/>
    </location>
</feature>
<feature type="non-terminal residue">
    <location>
        <position position="183"/>
    </location>
</feature>
<accession>P69643</accession>
<accession>O20100</accession>
<accession>O20216</accession>
<accession>O20261</accession>
<sequence length="183" mass="21138">RFKKIRRLGALPGLTSKRPRSGSDLKNQLRSGKRSQYRIRLEEKQKLRFHYGLTERQLLKYVHIAGKAKGSTGQILLQLLEMRLDNILFRLGMASTIPGARQLVNHRHILVNGRIVDIPSYRCKPRDIITTKNKQRSKALIQNFIASSPHQEELPNHLTIDPFQYKGLVNQIIDSKWIGLKIN</sequence>
<organism>
    <name type="scientific">Gladiolus communis</name>
    <name type="common">Cornflag</name>
    <dbReference type="NCBI Taxonomy" id="58992"/>
    <lineage>
        <taxon>Eukaryota</taxon>
        <taxon>Viridiplantae</taxon>
        <taxon>Streptophyta</taxon>
        <taxon>Embryophyta</taxon>
        <taxon>Tracheophyta</taxon>
        <taxon>Spermatophyta</taxon>
        <taxon>Magnoliopsida</taxon>
        <taxon>Liliopsida</taxon>
        <taxon>Asparagales</taxon>
        <taxon>Iridaceae</taxon>
        <taxon>Crocoideae</taxon>
        <taxon>Gladioleae</taxon>
        <taxon>Gladiolus</taxon>
    </lineage>
</organism>
<gene>
    <name type="primary">rps4</name>
</gene>
<comment type="function">
    <text evidence="1">One of the primary rRNA binding proteins, it binds directly to 16S rRNA where it nucleates assembly of the body of the 30S subunit.</text>
</comment>
<comment type="function">
    <text evidence="1">With S5 and S12 plays an important role in translational accuracy.</text>
</comment>
<comment type="subunit">
    <text evidence="1">Part of the 30S ribosomal subunit. Contacts protein S5. The interaction surface between S4 and S5 is involved in control of translational fidelity (By similarity).</text>
</comment>
<comment type="subcellular location">
    <subcellularLocation>
        <location>Plastid</location>
        <location>Chloroplast</location>
    </subcellularLocation>
</comment>
<comment type="similarity">
    <text evidence="2">Belongs to the universal ribosomal protein uS4 family.</text>
</comment>
<protein>
    <recommendedName>
        <fullName evidence="2">Small ribosomal subunit protein uS4c</fullName>
    </recommendedName>
    <alternativeName>
        <fullName>30S ribosomal protein S4, chloroplastic</fullName>
    </alternativeName>
</protein>
<evidence type="ECO:0000250" key="1"/>
<evidence type="ECO:0000305" key="2"/>
<proteinExistence type="inferred from homology"/>
<name>RR4_GLACO</name>
<reference key="1">
    <citation type="journal article" date="1997" name="Plant Syst. Evol.">
        <title>Phylogenetic analysis of Iridaceae with parsimony and distance methods using the plastid gene rps4.</title>
        <authorList>
            <person name="Souza-Chies T.T."/>
            <person name="Bittar G."/>
            <person name="Nadot S."/>
            <person name="Carter L."/>
            <person name="Besin E."/>
            <person name="Lejeune B.P."/>
        </authorList>
    </citation>
    <scope>NUCLEOTIDE SEQUENCE [GENOMIC DNA]</scope>
</reference>